<name>RS7_PARDP</name>
<sequence length="156" mass="17937">MSRRHAAEKREVLPDAKYGDRVLTKFMNNLMIDGKKSVAERIVYNALDRVQGKLKREPIEVFHEALDNVKPSVEVRSRRVGGATYQVPVEVRPSRREALAIRWLIDASKKRNEHTMEERLAGELADAVNGRGTAVKKREDTHKMADANKAFSHYRW</sequence>
<gene>
    <name evidence="1" type="primary">rpsG</name>
    <name type="ordered locus">Pden_0754</name>
</gene>
<organism>
    <name type="scientific">Paracoccus denitrificans (strain Pd 1222)</name>
    <dbReference type="NCBI Taxonomy" id="318586"/>
    <lineage>
        <taxon>Bacteria</taxon>
        <taxon>Pseudomonadati</taxon>
        <taxon>Pseudomonadota</taxon>
        <taxon>Alphaproteobacteria</taxon>
        <taxon>Rhodobacterales</taxon>
        <taxon>Paracoccaceae</taxon>
        <taxon>Paracoccus</taxon>
    </lineage>
</organism>
<feature type="chain" id="PRO_1000014249" description="Small ribosomal subunit protein uS7">
    <location>
        <begin position="1"/>
        <end position="156"/>
    </location>
</feature>
<protein>
    <recommendedName>
        <fullName evidence="1">Small ribosomal subunit protein uS7</fullName>
    </recommendedName>
    <alternativeName>
        <fullName evidence="2">30S ribosomal protein S7</fullName>
    </alternativeName>
</protein>
<dbReference type="EMBL" id="CP000489">
    <property type="protein sequence ID" value="ABL68866.1"/>
    <property type="molecule type" value="Genomic_DNA"/>
</dbReference>
<dbReference type="RefSeq" id="WP_011747098.1">
    <property type="nucleotide sequence ID" value="NC_008686.1"/>
</dbReference>
<dbReference type="SMR" id="A1B022"/>
<dbReference type="STRING" id="318586.Pden_0754"/>
<dbReference type="EnsemblBacteria" id="ABL68866">
    <property type="protein sequence ID" value="ABL68866"/>
    <property type="gene ID" value="Pden_0754"/>
</dbReference>
<dbReference type="GeneID" id="93451978"/>
<dbReference type="KEGG" id="pde:Pden_0754"/>
<dbReference type="eggNOG" id="COG0049">
    <property type="taxonomic scope" value="Bacteria"/>
</dbReference>
<dbReference type="HOGENOM" id="CLU_072226_1_1_5"/>
<dbReference type="OrthoDB" id="9807653at2"/>
<dbReference type="Proteomes" id="UP000000361">
    <property type="component" value="Chromosome 1"/>
</dbReference>
<dbReference type="GO" id="GO:0015935">
    <property type="term" value="C:small ribosomal subunit"/>
    <property type="evidence" value="ECO:0007669"/>
    <property type="project" value="InterPro"/>
</dbReference>
<dbReference type="GO" id="GO:0019843">
    <property type="term" value="F:rRNA binding"/>
    <property type="evidence" value="ECO:0007669"/>
    <property type="project" value="UniProtKB-UniRule"/>
</dbReference>
<dbReference type="GO" id="GO:0003735">
    <property type="term" value="F:structural constituent of ribosome"/>
    <property type="evidence" value="ECO:0007669"/>
    <property type="project" value="InterPro"/>
</dbReference>
<dbReference type="GO" id="GO:0000049">
    <property type="term" value="F:tRNA binding"/>
    <property type="evidence" value="ECO:0007669"/>
    <property type="project" value="UniProtKB-UniRule"/>
</dbReference>
<dbReference type="GO" id="GO:0006412">
    <property type="term" value="P:translation"/>
    <property type="evidence" value="ECO:0007669"/>
    <property type="project" value="UniProtKB-UniRule"/>
</dbReference>
<dbReference type="CDD" id="cd14869">
    <property type="entry name" value="uS7_Bacteria"/>
    <property type="match status" value="1"/>
</dbReference>
<dbReference type="FunFam" id="1.10.455.10:FF:000001">
    <property type="entry name" value="30S ribosomal protein S7"/>
    <property type="match status" value="1"/>
</dbReference>
<dbReference type="Gene3D" id="1.10.455.10">
    <property type="entry name" value="Ribosomal protein S7 domain"/>
    <property type="match status" value="1"/>
</dbReference>
<dbReference type="HAMAP" id="MF_00480_B">
    <property type="entry name" value="Ribosomal_uS7_B"/>
    <property type="match status" value="1"/>
</dbReference>
<dbReference type="InterPro" id="IPR000235">
    <property type="entry name" value="Ribosomal_uS7"/>
</dbReference>
<dbReference type="InterPro" id="IPR005717">
    <property type="entry name" value="Ribosomal_uS7_bac/org-type"/>
</dbReference>
<dbReference type="InterPro" id="IPR020606">
    <property type="entry name" value="Ribosomal_uS7_CS"/>
</dbReference>
<dbReference type="InterPro" id="IPR023798">
    <property type="entry name" value="Ribosomal_uS7_dom"/>
</dbReference>
<dbReference type="InterPro" id="IPR036823">
    <property type="entry name" value="Ribosomal_uS7_dom_sf"/>
</dbReference>
<dbReference type="NCBIfam" id="TIGR01029">
    <property type="entry name" value="rpsG_bact"/>
    <property type="match status" value="1"/>
</dbReference>
<dbReference type="PANTHER" id="PTHR11205">
    <property type="entry name" value="RIBOSOMAL PROTEIN S7"/>
    <property type="match status" value="1"/>
</dbReference>
<dbReference type="Pfam" id="PF00177">
    <property type="entry name" value="Ribosomal_S7"/>
    <property type="match status" value="1"/>
</dbReference>
<dbReference type="PIRSF" id="PIRSF002122">
    <property type="entry name" value="RPS7p_RPS7a_RPS5e_RPS7o"/>
    <property type="match status" value="1"/>
</dbReference>
<dbReference type="SUPFAM" id="SSF47973">
    <property type="entry name" value="Ribosomal protein S7"/>
    <property type="match status" value="1"/>
</dbReference>
<dbReference type="PROSITE" id="PS00052">
    <property type="entry name" value="RIBOSOMAL_S7"/>
    <property type="match status" value="1"/>
</dbReference>
<proteinExistence type="inferred from homology"/>
<evidence type="ECO:0000255" key="1">
    <source>
        <dbReference type="HAMAP-Rule" id="MF_00480"/>
    </source>
</evidence>
<evidence type="ECO:0000305" key="2"/>
<keyword id="KW-1185">Reference proteome</keyword>
<keyword id="KW-0687">Ribonucleoprotein</keyword>
<keyword id="KW-0689">Ribosomal protein</keyword>
<keyword id="KW-0694">RNA-binding</keyword>
<keyword id="KW-0699">rRNA-binding</keyword>
<keyword id="KW-0820">tRNA-binding</keyword>
<reference key="1">
    <citation type="submission" date="2006-12" db="EMBL/GenBank/DDBJ databases">
        <title>Complete sequence of chromosome 1 of Paracoccus denitrificans PD1222.</title>
        <authorList>
            <person name="Copeland A."/>
            <person name="Lucas S."/>
            <person name="Lapidus A."/>
            <person name="Barry K."/>
            <person name="Detter J.C."/>
            <person name="Glavina del Rio T."/>
            <person name="Hammon N."/>
            <person name="Israni S."/>
            <person name="Dalin E."/>
            <person name="Tice H."/>
            <person name="Pitluck S."/>
            <person name="Munk A.C."/>
            <person name="Brettin T."/>
            <person name="Bruce D."/>
            <person name="Han C."/>
            <person name="Tapia R."/>
            <person name="Gilna P."/>
            <person name="Schmutz J."/>
            <person name="Larimer F."/>
            <person name="Land M."/>
            <person name="Hauser L."/>
            <person name="Kyrpides N."/>
            <person name="Lykidis A."/>
            <person name="Spiro S."/>
            <person name="Richardson D.J."/>
            <person name="Moir J.W.B."/>
            <person name="Ferguson S.J."/>
            <person name="van Spanning R.J.M."/>
            <person name="Richardson P."/>
        </authorList>
    </citation>
    <scope>NUCLEOTIDE SEQUENCE [LARGE SCALE GENOMIC DNA]</scope>
    <source>
        <strain>Pd 1222</strain>
    </source>
</reference>
<comment type="function">
    <text evidence="1">One of the primary rRNA binding proteins, it binds directly to 16S rRNA where it nucleates assembly of the head domain of the 30S subunit. Is located at the subunit interface close to the decoding center, probably blocks exit of the E-site tRNA.</text>
</comment>
<comment type="subunit">
    <text evidence="1">Part of the 30S ribosomal subunit. Contacts proteins S9 and S11.</text>
</comment>
<comment type="similarity">
    <text evidence="1">Belongs to the universal ribosomal protein uS7 family.</text>
</comment>
<accession>A1B022</accession>